<organism>
    <name type="scientific">Haemophilus influenzae (strain ATCC 51907 / DSM 11121 / KW20 / Rd)</name>
    <dbReference type="NCBI Taxonomy" id="71421"/>
    <lineage>
        <taxon>Bacteria</taxon>
        <taxon>Pseudomonadati</taxon>
        <taxon>Pseudomonadota</taxon>
        <taxon>Gammaproteobacteria</taxon>
        <taxon>Pasteurellales</taxon>
        <taxon>Pasteurellaceae</taxon>
        <taxon>Haemophilus</taxon>
    </lineage>
</organism>
<dbReference type="EMBL" id="L42023">
    <property type="protein sequence ID" value="AAC21790.1"/>
    <property type="molecule type" value="Genomic_DNA"/>
</dbReference>
<dbReference type="PIR" id="F64001">
    <property type="entry name" value="F64001"/>
</dbReference>
<dbReference type="RefSeq" id="NP_438283.1">
    <property type="nucleotide sequence ID" value="NC_000907.1"/>
</dbReference>
<dbReference type="SMR" id="P43943"/>
<dbReference type="EnsemblBacteria" id="AAC21790">
    <property type="protein sequence ID" value="AAC21790"/>
    <property type="gene ID" value="HI_0109"/>
</dbReference>
<dbReference type="KEGG" id="hin:HI_0109"/>
<dbReference type="PATRIC" id="fig|71421.8.peg.113"/>
<dbReference type="eggNOG" id="COG3765">
    <property type="taxonomic scope" value="Bacteria"/>
</dbReference>
<dbReference type="HOGENOM" id="CLU_170984_0_0_6"/>
<dbReference type="OrthoDB" id="9775724at2"/>
<dbReference type="BioCyc" id="HINF71421:G1GJ1-113-MONOMER"/>
<dbReference type="Proteomes" id="UP000000579">
    <property type="component" value="Chromosome"/>
</dbReference>
<dbReference type="Gene3D" id="3.30.1890.10">
    <property type="entry name" value="FepE-like"/>
    <property type="match status" value="1"/>
</dbReference>
<dbReference type="SUPFAM" id="SSF160355">
    <property type="entry name" value="Bacterial polysaccharide co-polymerase-like"/>
    <property type="match status" value="1"/>
</dbReference>
<protein>
    <recommendedName>
        <fullName>Uncharacterized protein HI_0109</fullName>
    </recommendedName>
</protein>
<gene>
    <name type="ordered locus">HI_0109</name>
</gene>
<evidence type="ECO:0000255" key="1"/>
<feature type="signal peptide" evidence="1">
    <location>
        <begin position="1"/>
        <end position="38"/>
    </location>
</feature>
<feature type="chain" id="PRO_0000013950" description="Uncharacterized protein HI_0109">
    <location>
        <begin position="39"/>
        <end position="113"/>
    </location>
</feature>
<reference key="1">
    <citation type="journal article" date="1995" name="Science">
        <title>Whole-genome random sequencing and assembly of Haemophilus influenzae Rd.</title>
        <authorList>
            <person name="Fleischmann R.D."/>
            <person name="Adams M.D."/>
            <person name="White O."/>
            <person name="Clayton R.A."/>
            <person name="Kirkness E.F."/>
            <person name="Kerlavage A.R."/>
            <person name="Bult C.J."/>
            <person name="Tomb J.-F."/>
            <person name="Dougherty B.A."/>
            <person name="Merrick J.M."/>
            <person name="McKenney K."/>
            <person name="Sutton G.G."/>
            <person name="FitzHugh W."/>
            <person name="Fields C.A."/>
            <person name="Gocayne J.D."/>
            <person name="Scott J.D."/>
            <person name="Shirley R."/>
            <person name="Liu L.-I."/>
            <person name="Glodek A."/>
            <person name="Kelley J.M."/>
            <person name="Weidman J.F."/>
            <person name="Phillips C.A."/>
            <person name="Spriggs T."/>
            <person name="Hedblom E."/>
            <person name="Cotton M.D."/>
            <person name="Utterback T.R."/>
            <person name="Hanna M.C."/>
            <person name="Nguyen D.T."/>
            <person name="Saudek D.M."/>
            <person name="Brandon R.C."/>
            <person name="Fine L.D."/>
            <person name="Fritchman J.L."/>
            <person name="Fuhrmann J.L."/>
            <person name="Geoghagen N.S.M."/>
            <person name="Gnehm C.L."/>
            <person name="McDonald L.A."/>
            <person name="Small K.V."/>
            <person name="Fraser C.M."/>
            <person name="Smith H.O."/>
            <person name="Venter J.C."/>
        </authorList>
    </citation>
    <scope>NUCLEOTIDE SEQUENCE [LARGE SCALE GENOMIC DNA]</scope>
    <source>
        <strain>ATCC 51907 / DSM 11121 / KW20 / Rd</strain>
    </source>
</reference>
<name>Y109_HAEIN</name>
<sequence length="113" mass="13379">MVKIERKATDSAYHEFTKILTSSAQLMAFLNQSDFVKARAKVENETVQQIASHFKFSQENNLNQLILSSFDREEVDQLFVEYIRYVNNQVRQTLNNELITKWKSLFEKRKITD</sequence>
<proteinExistence type="inferred from homology"/>
<keyword id="KW-1185">Reference proteome</keyword>
<keyword id="KW-0732">Signal</keyword>
<accession>P43943</accession>